<reference key="1">
    <citation type="submission" date="2000-02" db="EMBL/GenBank/DDBJ databases">
        <title>Long branches in the seed plants and the root of the angiosperms.</title>
        <authorList>
            <person name="Graham S.W."/>
            <person name="Reeves P.A."/>
            <person name="Burns A."/>
            <person name="Olmstead R.G."/>
        </authorList>
    </citation>
    <scope>NUCLEOTIDE SEQUENCE [GENOMIC DNA]</scope>
</reference>
<feature type="chain" id="PRO_0000207904" description="Protein PsbN">
    <location>
        <begin position="1"/>
        <end position="43"/>
    </location>
</feature>
<feature type="transmembrane region" description="Helical" evidence="1">
    <location>
        <begin position="5"/>
        <end position="27"/>
    </location>
</feature>
<dbReference type="EMBL" id="AY007463">
    <property type="protein sequence ID" value="AAG12365.1"/>
    <property type="molecule type" value="Genomic_DNA"/>
</dbReference>
<dbReference type="SMR" id="Q7HIW6"/>
<dbReference type="GO" id="GO:0009535">
    <property type="term" value="C:chloroplast thylakoid membrane"/>
    <property type="evidence" value="ECO:0007669"/>
    <property type="project" value="UniProtKB-SubCell"/>
</dbReference>
<dbReference type="GO" id="GO:0015979">
    <property type="term" value="P:photosynthesis"/>
    <property type="evidence" value="ECO:0007669"/>
    <property type="project" value="InterPro"/>
</dbReference>
<dbReference type="HAMAP" id="MF_00293">
    <property type="entry name" value="PSII_PsbN"/>
    <property type="match status" value="1"/>
</dbReference>
<dbReference type="InterPro" id="IPR003398">
    <property type="entry name" value="PSII_PsbN"/>
</dbReference>
<dbReference type="PANTHER" id="PTHR35326">
    <property type="entry name" value="PROTEIN PSBN"/>
    <property type="match status" value="1"/>
</dbReference>
<dbReference type="PANTHER" id="PTHR35326:SF3">
    <property type="entry name" value="PROTEIN PSBN"/>
    <property type="match status" value="1"/>
</dbReference>
<dbReference type="Pfam" id="PF02468">
    <property type="entry name" value="PsbN"/>
    <property type="match status" value="1"/>
</dbReference>
<keyword id="KW-0150">Chloroplast</keyword>
<keyword id="KW-0472">Membrane</keyword>
<keyword id="KW-0934">Plastid</keyword>
<keyword id="KW-0793">Thylakoid</keyword>
<keyword id="KW-0812">Transmembrane</keyword>
<keyword id="KW-1133">Transmembrane helix</keyword>
<accession>Q7HIW6</accession>
<geneLocation type="chloroplast"/>
<comment type="function">
    <text evidence="1">May play a role in photosystem I and II biogenesis.</text>
</comment>
<comment type="subcellular location">
    <subcellularLocation>
        <location evidence="1">Plastid</location>
        <location evidence="1">Chloroplast thylakoid membrane</location>
        <topology evidence="1">Single-pass membrane protein</topology>
    </subcellularLocation>
</comment>
<comment type="similarity">
    <text evidence="1">Belongs to the PsbN family.</text>
</comment>
<comment type="caution">
    <text evidence="1">Originally thought to be a component of PSII; based on experiments in Synechocystis, N.tabacum and barley, and its absence from PSII in T.elongatus and T.vulcanus, this is probably not true.</text>
</comment>
<evidence type="ECO:0000255" key="1">
    <source>
        <dbReference type="HAMAP-Rule" id="MF_00293"/>
    </source>
</evidence>
<gene>
    <name evidence="1" type="primary">psbN</name>
</gene>
<proteinExistence type="inferred from homology"/>
<sequence length="43" mass="4662">METATLVAISISGLLVSFTGYALYTAFGQPSQQLRDPFEEHGD</sequence>
<protein>
    <recommendedName>
        <fullName evidence="1">Protein PsbN</fullName>
    </recommendedName>
</protein>
<name>PSBN_GUNCH</name>
<organism>
    <name type="scientific">Gunnera chilensis</name>
    <name type="common">Chilean rhubarb</name>
    <dbReference type="NCBI Taxonomy" id="130722"/>
    <lineage>
        <taxon>Eukaryota</taxon>
        <taxon>Viridiplantae</taxon>
        <taxon>Streptophyta</taxon>
        <taxon>Embryophyta</taxon>
        <taxon>Tracheophyta</taxon>
        <taxon>Spermatophyta</taxon>
        <taxon>Magnoliopsida</taxon>
        <taxon>eudicotyledons</taxon>
        <taxon>Gunneridae</taxon>
        <taxon>Gunnerales</taxon>
        <taxon>Gunneraceae</taxon>
        <taxon>Gunnera</taxon>
    </lineage>
</organism>